<reference key="1">
    <citation type="journal article" date="2005" name="DNA Res.">
        <title>Complete genome sequence of the facultative anaerobic magnetotactic bacterium Magnetospirillum sp. strain AMB-1.</title>
        <authorList>
            <person name="Matsunaga T."/>
            <person name="Okamura Y."/>
            <person name="Fukuda Y."/>
            <person name="Wahyudi A.T."/>
            <person name="Murase Y."/>
            <person name="Takeyama H."/>
        </authorList>
    </citation>
    <scope>NUCLEOTIDE SEQUENCE [LARGE SCALE GENOMIC DNA]</scope>
    <source>
        <strain>ATCC 700264 / AMB-1</strain>
    </source>
</reference>
<sequence length="447" mass="48776">MTRTVHVIGGGLAGSEAAWQLAQADIPVILHEMRPVRTTPAHQTDGLAELVCSNSLRSDDADYNAVGLLHEEMRRAGSLILAQADAHKVPAGGALAVDRDGFSQGVQAALAGHPRITILREEVAGLPPEDWEQVVIATGPLTSPAMAEALRGMTGEDSLAFFDAIAPIVTKDSIDFGKAWFQSRYDKGTGSDYINCPLDREQYNTFIDALITGEKVDFHEWEKDTPYFEGCLPIEVMAERGKDTLAYGPMKPVGLTNPNGPKPFAVVQLRQDNALGTLYNLVGFQTKLRHGEQARIFRAIPGLENAEFARLGGLHRNTFINGPRVLDRTLRLKAQPRLRLAGQVTGCEGYVESSAIGLLAGLFAAAEALGRDMLRPPATTALGALLNHVTGDAEAETYQPMNINFGLFPPPPERDERGRRVKGRDRKKLYAQRAREALTPWLNTIRE</sequence>
<evidence type="ECO:0000255" key="1">
    <source>
        <dbReference type="HAMAP-Rule" id="MF_01037"/>
    </source>
</evidence>
<evidence type="ECO:0000305" key="2"/>
<feature type="chain" id="PRO_0000346352" description="Methylenetetrahydrofolate--tRNA-(uracil-5-)-methyltransferase TrmFO">
    <location>
        <begin position="1"/>
        <end position="447"/>
    </location>
</feature>
<feature type="binding site" evidence="1">
    <location>
        <begin position="9"/>
        <end position="14"/>
    </location>
    <ligand>
        <name>FAD</name>
        <dbReference type="ChEBI" id="CHEBI:57692"/>
    </ligand>
</feature>
<gene>
    <name evidence="1" type="primary">trmFO</name>
    <name type="ordered locus">amb2482</name>
</gene>
<accession>Q2W4D9</accession>
<proteinExistence type="inferred from homology"/>
<name>TRMFO_PARM1</name>
<comment type="function">
    <text evidence="1">Catalyzes the folate-dependent formation of 5-methyl-uridine at position 54 (M-5-U54) in all tRNAs.</text>
</comment>
<comment type="catalytic activity">
    <reaction evidence="1">
        <text>uridine(54) in tRNA + (6R)-5,10-methylene-5,6,7,8-tetrahydrofolate + NADH + H(+) = 5-methyluridine(54) in tRNA + (6S)-5,6,7,8-tetrahydrofolate + NAD(+)</text>
        <dbReference type="Rhea" id="RHEA:16873"/>
        <dbReference type="Rhea" id="RHEA-COMP:10167"/>
        <dbReference type="Rhea" id="RHEA-COMP:10193"/>
        <dbReference type="ChEBI" id="CHEBI:15378"/>
        <dbReference type="ChEBI" id="CHEBI:15636"/>
        <dbReference type="ChEBI" id="CHEBI:57453"/>
        <dbReference type="ChEBI" id="CHEBI:57540"/>
        <dbReference type="ChEBI" id="CHEBI:57945"/>
        <dbReference type="ChEBI" id="CHEBI:65315"/>
        <dbReference type="ChEBI" id="CHEBI:74447"/>
        <dbReference type="EC" id="2.1.1.74"/>
    </reaction>
</comment>
<comment type="catalytic activity">
    <reaction evidence="1">
        <text>uridine(54) in tRNA + (6R)-5,10-methylene-5,6,7,8-tetrahydrofolate + NADPH + H(+) = 5-methyluridine(54) in tRNA + (6S)-5,6,7,8-tetrahydrofolate + NADP(+)</text>
        <dbReference type="Rhea" id="RHEA:62372"/>
        <dbReference type="Rhea" id="RHEA-COMP:10167"/>
        <dbReference type="Rhea" id="RHEA-COMP:10193"/>
        <dbReference type="ChEBI" id="CHEBI:15378"/>
        <dbReference type="ChEBI" id="CHEBI:15636"/>
        <dbReference type="ChEBI" id="CHEBI:57453"/>
        <dbReference type="ChEBI" id="CHEBI:57783"/>
        <dbReference type="ChEBI" id="CHEBI:58349"/>
        <dbReference type="ChEBI" id="CHEBI:65315"/>
        <dbReference type="ChEBI" id="CHEBI:74447"/>
        <dbReference type="EC" id="2.1.1.74"/>
    </reaction>
</comment>
<comment type="cofactor">
    <cofactor evidence="1">
        <name>FAD</name>
        <dbReference type="ChEBI" id="CHEBI:57692"/>
    </cofactor>
</comment>
<comment type="subcellular location">
    <subcellularLocation>
        <location evidence="1">Cytoplasm</location>
    </subcellularLocation>
</comment>
<comment type="similarity">
    <text evidence="1">Belongs to the MnmG family. TrmFO subfamily.</text>
</comment>
<comment type="sequence caution" evidence="2">
    <conflict type="erroneous initiation">
        <sequence resource="EMBL-CDS" id="BAE51286"/>
    </conflict>
</comment>
<dbReference type="EC" id="2.1.1.74" evidence="1"/>
<dbReference type="EMBL" id="AP007255">
    <property type="protein sequence ID" value="BAE51286.1"/>
    <property type="status" value="ALT_INIT"/>
    <property type="molecule type" value="Genomic_DNA"/>
</dbReference>
<dbReference type="RefSeq" id="WP_011384863.1">
    <property type="nucleotide sequence ID" value="NC_007626.1"/>
</dbReference>
<dbReference type="SMR" id="Q2W4D9"/>
<dbReference type="STRING" id="342108.amb2482"/>
<dbReference type="KEGG" id="mag:amb2482"/>
<dbReference type="HOGENOM" id="CLU_033057_1_0_5"/>
<dbReference type="OrthoDB" id="9803114at2"/>
<dbReference type="Proteomes" id="UP000007058">
    <property type="component" value="Chromosome"/>
</dbReference>
<dbReference type="GO" id="GO:0005829">
    <property type="term" value="C:cytosol"/>
    <property type="evidence" value="ECO:0007669"/>
    <property type="project" value="TreeGrafter"/>
</dbReference>
<dbReference type="GO" id="GO:0050660">
    <property type="term" value="F:flavin adenine dinucleotide binding"/>
    <property type="evidence" value="ECO:0007669"/>
    <property type="project" value="UniProtKB-UniRule"/>
</dbReference>
<dbReference type="GO" id="GO:0047151">
    <property type="term" value="F:tRNA (uracil(54)-C5)-methyltransferase activity, 5,10-methylenetetrahydrofolate-dependent"/>
    <property type="evidence" value="ECO:0007669"/>
    <property type="project" value="UniProtKB-UniRule"/>
</dbReference>
<dbReference type="GO" id="GO:0030488">
    <property type="term" value="P:tRNA methylation"/>
    <property type="evidence" value="ECO:0007669"/>
    <property type="project" value="TreeGrafter"/>
</dbReference>
<dbReference type="GO" id="GO:0002098">
    <property type="term" value="P:tRNA wobble uridine modification"/>
    <property type="evidence" value="ECO:0007669"/>
    <property type="project" value="TreeGrafter"/>
</dbReference>
<dbReference type="Gene3D" id="3.50.50.60">
    <property type="entry name" value="FAD/NAD(P)-binding domain"/>
    <property type="match status" value="2"/>
</dbReference>
<dbReference type="HAMAP" id="MF_01037">
    <property type="entry name" value="TrmFO"/>
    <property type="match status" value="1"/>
</dbReference>
<dbReference type="InterPro" id="IPR036188">
    <property type="entry name" value="FAD/NAD-bd_sf"/>
</dbReference>
<dbReference type="InterPro" id="IPR002218">
    <property type="entry name" value="MnmG-rel"/>
</dbReference>
<dbReference type="InterPro" id="IPR020595">
    <property type="entry name" value="MnmG-rel_CS"/>
</dbReference>
<dbReference type="InterPro" id="IPR040131">
    <property type="entry name" value="MnmG_N"/>
</dbReference>
<dbReference type="InterPro" id="IPR004417">
    <property type="entry name" value="TrmFO"/>
</dbReference>
<dbReference type="NCBIfam" id="TIGR00137">
    <property type="entry name" value="gid_trmFO"/>
    <property type="match status" value="1"/>
</dbReference>
<dbReference type="NCBIfam" id="NF003739">
    <property type="entry name" value="PRK05335.1"/>
    <property type="match status" value="1"/>
</dbReference>
<dbReference type="PANTHER" id="PTHR11806">
    <property type="entry name" value="GLUCOSE INHIBITED DIVISION PROTEIN A"/>
    <property type="match status" value="1"/>
</dbReference>
<dbReference type="PANTHER" id="PTHR11806:SF2">
    <property type="entry name" value="METHYLENETETRAHYDROFOLATE--TRNA-(URACIL-5-)-METHYLTRANSFERASE TRMFO"/>
    <property type="match status" value="1"/>
</dbReference>
<dbReference type="Pfam" id="PF01134">
    <property type="entry name" value="GIDA"/>
    <property type="match status" value="1"/>
</dbReference>
<dbReference type="SUPFAM" id="SSF51905">
    <property type="entry name" value="FAD/NAD(P)-binding domain"/>
    <property type="match status" value="1"/>
</dbReference>
<dbReference type="PROSITE" id="PS01281">
    <property type="entry name" value="GIDA_2"/>
    <property type="match status" value="1"/>
</dbReference>
<keyword id="KW-0963">Cytoplasm</keyword>
<keyword id="KW-0274">FAD</keyword>
<keyword id="KW-0285">Flavoprotein</keyword>
<keyword id="KW-0489">Methyltransferase</keyword>
<keyword id="KW-0520">NAD</keyword>
<keyword id="KW-0521">NADP</keyword>
<keyword id="KW-0808">Transferase</keyword>
<keyword id="KW-0819">tRNA processing</keyword>
<organism>
    <name type="scientific">Paramagnetospirillum magneticum (strain ATCC 700264 / AMB-1)</name>
    <name type="common">Magnetospirillum magneticum</name>
    <dbReference type="NCBI Taxonomy" id="342108"/>
    <lineage>
        <taxon>Bacteria</taxon>
        <taxon>Pseudomonadati</taxon>
        <taxon>Pseudomonadota</taxon>
        <taxon>Alphaproteobacteria</taxon>
        <taxon>Rhodospirillales</taxon>
        <taxon>Magnetospirillaceae</taxon>
        <taxon>Paramagnetospirillum</taxon>
    </lineage>
</organism>
<protein>
    <recommendedName>
        <fullName evidence="1">Methylenetetrahydrofolate--tRNA-(uracil-5-)-methyltransferase TrmFO</fullName>
        <ecNumber evidence="1">2.1.1.74</ecNumber>
    </recommendedName>
    <alternativeName>
        <fullName evidence="1">Folate-dependent tRNA (uracil-5-)-methyltransferase</fullName>
    </alternativeName>
    <alternativeName>
        <fullName evidence="1">Folate-dependent tRNA(M-5-U54)-methyltransferase</fullName>
    </alternativeName>
</protein>